<dbReference type="EC" id="2.4.2.53" evidence="1"/>
<dbReference type="EMBL" id="CP001138">
    <property type="protein sequence ID" value="ACH51441.1"/>
    <property type="molecule type" value="Genomic_DNA"/>
</dbReference>
<dbReference type="RefSeq" id="WP_000458893.1">
    <property type="nucleotide sequence ID" value="NC_011149.1"/>
</dbReference>
<dbReference type="SMR" id="B5EZH7"/>
<dbReference type="CAZy" id="GT2">
    <property type="family name" value="Glycosyltransferase Family 2"/>
</dbReference>
<dbReference type="KEGG" id="sea:SeAg_B2434"/>
<dbReference type="HOGENOM" id="CLU_033536_0_0_6"/>
<dbReference type="UniPathway" id="UPA00030"/>
<dbReference type="UniPathway" id="UPA00036">
    <property type="reaction ID" value="UER00495"/>
</dbReference>
<dbReference type="Proteomes" id="UP000008819">
    <property type="component" value="Chromosome"/>
</dbReference>
<dbReference type="GO" id="GO:0005886">
    <property type="term" value="C:plasma membrane"/>
    <property type="evidence" value="ECO:0007669"/>
    <property type="project" value="UniProtKB-SubCell"/>
</dbReference>
<dbReference type="GO" id="GO:0016780">
    <property type="term" value="F:phosphotransferase activity, for other substituted phosphate groups"/>
    <property type="evidence" value="ECO:0007669"/>
    <property type="project" value="UniProtKB-UniRule"/>
</dbReference>
<dbReference type="GO" id="GO:0099621">
    <property type="term" value="F:undecaprenyl-phosphate 4-deoxy-4-formamido-L-arabinose transferase activity"/>
    <property type="evidence" value="ECO:0007669"/>
    <property type="project" value="UniProtKB-EC"/>
</dbReference>
<dbReference type="GO" id="GO:0036108">
    <property type="term" value="P:4-amino-4-deoxy-alpha-L-arabinopyranosyl undecaprenyl phosphate biosynthetic process"/>
    <property type="evidence" value="ECO:0007669"/>
    <property type="project" value="UniProtKB-UniRule"/>
</dbReference>
<dbReference type="GO" id="GO:0009245">
    <property type="term" value="P:lipid A biosynthetic process"/>
    <property type="evidence" value="ECO:0007669"/>
    <property type="project" value="UniProtKB-UniRule"/>
</dbReference>
<dbReference type="GO" id="GO:0009103">
    <property type="term" value="P:lipopolysaccharide biosynthetic process"/>
    <property type="evidence" value="ECO:0007669"/>
    <property type="project" value="UniProtKB-UniRule"/>
</dbReference>
<dbReference type="GO" id="GO:0046677">
    <property type="term" value="P:response to antibiotic"/>
    <property type="evidence" value="ECO:0007669"/>
    <property type="project" value="UniProtKB-KW"/>
</dbReference>
<dbReference type="CDD" id="cd04187">
    <property type="entry name" value="DPM1_like_bac"/>
    <property type="match status" value="1"/>
</dbReference>
<dbReference type="FunFam" id="3.90.550.10:FF:000019">
    <property type="entry name" value="Undecaprenyl-phosphate 4-deoxy-4-formamido-L-arabinose transferase"/>
    <property type="match status" value="1"/>
</dbReference>
<dbReference type="Gene3D" id="3.90.550.10">
    <property type="entry name" value="Spore Coat Polysaccharide Biosynthesis Protein SpsA, Chain A"/>
    <property type="match status" value="1"/>
</dbReference>
<dbReference type="HAMAP" id="MF_01164">
    <property type="entry name" value="ArnC_transfer"/>
    <property type="match status" value="1"/>
</dbReference>
<dbReference type="InterPro" id="IPR022857">
    <property type="entry name" value="ArnC_tfrase"/>
</dbReference>
<dbReference type="InterPro" id="IPR001173">
    <property type="entry name" value="Glyco_trans_2-like"/>
</dbReference>
<dbReference type="InterPro" id="IPR050256">
    <property type="entry name" value="Glycosyltransferase_2"/>
</dbReference>
<dbReference type="InterPro" id="IPR029044">
    <property type="entry name" value="Nucleotide-diphossugar_trans"/>
</dbReference>
<dbReference type="NCBIfam" id="NF007986">
    <property type="entry name" value="PRK10714.1"/>
    <property type="match status" value="1"/>
</dbReference>
<dbReference type="PANTHER" id="PTHR48090:SF3">
    <property type="entry name" value="UNDECAPRENYL-PHOSPHATE 4-DEOXY-4-FORMAMIDO-L-ARABINOSE TRANSFERASE"/>
    <property type="match status" value="1"/>
</dbReference>
<dbReference type="PANTHER" id="PTHR48090">
    <property type="entry name" value="UNDECAPRENYL-PHOSPHATE 4-DEOXY-4-FORMAMIDO-L-ARABINOSE TRANSFERASE-RELATED"/>
    <property type="match status" value="1"/>
</dbReference>
<dbReference type="Pfam" id="PF00535">
    <property type="entry name" value="Glycos_transf_2"/>
    <property type="match status" value="1"/>
</dbReference>
<dbReference type="SUPFAM" id="SSF53448">
    <property type="entry name" value="Nucleotide-diphospho-sugar transferases"/>
    <property type="match status" value="1"/>
</dbReference>
<name>ARNC_SALA4</name>
<evidence type="ECO:0000255" key="1">
    <source>
        <dbReference type="HAMAP-Rule" id="MF_01164"/>
    </source>
</evidence>
<gene>
    <name evidence="1" type="primary">arnC</name>
    <name type="ordered locus">SeAg_B2434</name>
</gene>
<accession>B5EZH7</accession>
<reference key="1">
    <citation type="journal article" date="2011" name="J. Bacteriol.">
        <title>Comparative genomics of 28 Salmonella enterica isolates: evidence for CRISPR-mediated adaptive sublineage evolution.</title>
        <authorList>
            <person name="Fricke W.F."/>
            <person name="Mammel M.K."/>
            <person name="McDermott P.F."/>
            <person name="Tartera C."/>
            <person name="White D.G."/>
            <person name="Leclerc J.E."/>
            <person name="Ravel J."/>
            <person name="Cebula T.A."/>
        </authorList>
    </citation>
    <scope>NUCLEOTIDE SEQUENCE [LARGE SCALE GENOMIC DNA]</scope>
    <source>
        <strain>SL483</strain>
    </source>
</reference>
<proteinExistence type="inferred from homology"/>
<comment type="function">
    <text evidence="1">Catalyzes the transfer of 4-deoxy-4-formamido-L-arabinose from UDP to undecaprenyl phosphate. The modified arabinose is attached to lipid A and is required for resistance to polymyxin and cationic antimicrobial peptides.</text>
</comment>
<comment type="catalytic activity">
    <reaction evidence="1">
        <text>UDP-4-deoxy-4-formamido-beta-L-arabinose + di-trans,octa-cis-undecaprenyl phosphate = 4-deoxy-4-formamido-alpha-L-arabinopyranosyl di-trans,octa-cis-undecaprenyl phosphate + UDP</text>
        <dbReference type="Rhea" id="RHEA:27722"/>
        <dbReference type="ChEBI" id="CHEBI:58223"/>
        <dbReference type="ChEBI" id="CHEBI:58709"/>
        <dbReference type="ChEBI" id="CHEBI:58909"/>
        <dbReference type="ChEBI" id="CHEBI:60392"/>
        <dbReference type="EC" id="2.4.2.53"/>
    </reaction>
</comment>
<comment type="pathway">
    <text evidence="1">Glycolipid biosynthesis; 4-amino-4-deoxy-alpha-L-arabinose undecaprenyl phosphate biosynthesis; 4-amino-4-deoxy-alpha-L-arabinose undecaprenyl phosphate from UDP-4-deoxy-4-formamido-beta-L-arabinose and undecaprenyl phosphate: step 1/2.</text>
</comment>
<comment type="pathway">
    <text evidence="1">Bacterial outer membrane biogenesis; lipopolysaccharide biosynthesis.</text>
</comment>
<comment type="subcellular location">
    <subcellularLocation>
        <location evidence="1">Cell inner membrane</location>
        <topology evidence="1">Multi-pass membrane protein</topology>
    </subcellularLocation>
</comment>
<comment type="similarity">
    <text evidence="1">Belongs to the glycosyltransferase 2 family.</text>
</comment>
<keyword id="KW-0046">Antibiotic resistance</keyword>
<keyword id="KW-0997">Cell inner membrane</keyword>
<keyword id="KW-1003">Cell membrane</keyword>
<keyword id="KW-0328">Glycosyltransferase</keyword>
<keyword id="KW-0441">Lipid A biosynthesis</keyword>
<keyword id="KW-0444">Lipid biosynthesis</keyword>
<keyword id="KW-0443">Lipid metabolism</keyword>
<keyword id="KW-0448">Lipopolysaccharide biosynthesis</keyword>
<keyword id="KW-0472">Membrane</keyword>
<keyword id="KW-0808">Transferase</keyword>
<keyword id="KW-0812">Transmembrane</keyword>
<keyword id="KW-1133">Transmembrane helix</keyword>
<organism>
    <name type="scientific">Salmonella agona (strain SL483)</name>
    <dbReference type="NCBI Taxonomy" id="454166"/>
    <lineage>
        <taxon>Bacteria</taxon>
        <taxon>Pseudomonadati</taxon>
        <taxon>Pseudomonadota</taxon>
        <taxon>Gammaproteobacteria</taxon>
        <taxon>Enterobacterales</taxon>
        <taxon>Enterobacteriaceae</taxon>
        <taxon>Salmonella</taxon>
    </lineage>
</organism>
<protein>
    <recommendedName>
        <fullName evidence="1">Undecaprenyl-phosphate 4-deoxy-4-formamido-L-arabinose transferase</fullName>
        <ecNumber evidence="1">2.4.2.53</ecNumber>
    </recommendedName>
    <alternativeName>
        <fullName evidence="1">Undecaprenyl-phosphate Ara4FN transferase</fullName>
        <shortName evidence="1">Ara4FN transferase</shortName>
    </alternativeName>
</protein>
<feature type="chain" id="PRO_1000137917" description="Undecaprenyl-phosphate 4-deoxy-4-formamido-L-arabinose transferase">
    <location>
        <begin position="1"/>
        <end position="327"/>
    </location>
</feature>
<feature type="topological domain" description="Cytoplasmic" evidence="1">
    <location>
        <begin position="1"/>
        <end position="235"/>
    </location>
</feature>
<feature type="transmembrane region" description="Helical" evidence="1">
    <location>
        <begin position="236"/>
        <end position="256"/>
    </location>
</feature>
<feature type="topological domain" description="Periplasmic" evidence="1">
    <location>
        <begin position="257"/>
        <end position="269"/>
    </location>
</feature>
<feature type="transmembrane region" description="Helical" evidence="1">
    <location>
        <begin position="270"/>
        <end position="290"/>
    </location>
</feature>
<feature type="topological domain" description="Cytoplasmic" evidence="1">
    <location>
        <begin position="291"/>
        <end position="327"/>
    </location>
</feature>
<sequence length="327" mass="36516">MFDAAPIKKVSVVIPVYNEQESLPELIRRTTTACESLGKAWEILLIDDGSSDSSAELMVKASQEADSHIISILLNRNYGQHAAIMAGFSHVSGDLIITLDADLQNPPEEIPRLVAKADEGFDVVGTVRQNRQDSLFRKSASKIINLLIQRTTGKAMGDYGCMLRAYRRPIIDTMLRCHERSTFIPILANIFARRATEIPVHHAEREFGDSKYSFMRLINLMYDLVTCLTTTPLRLLSLLGSVIAIGGFSLSVLLIVLRLALGPQWAAEGVFMLFAVLFTFIGAQFIGMGLLGEYIGRIYNDVRARPRYFVQQVIYPESTPFTEESHQ</sequence>